<comment type="similarity">
    <text evidence="1">Belongs to the UPF0235 family.</text>
</comment>
<reference key="1">
    <citation type="submission" date="2007-11" db="EMBL/GenBank/DDBJ databases">
        <authorList>
            <consortium name="The Salmonella enterica serovar Paratyphi B Genome Sequencing Project"/>
            <person name="McClelland M."/>
            <person name="Sanderson E.K."/>
            <person name="Porwollik S."/>
            <person name="Spieth J."/>
            <person name="Clifton W.S."/>
            <person name="Fulton R."/>
            <person name="Cordes M."/>
            <person name="Wollam A."/>
            <person name="Shah N."/>
            <person name="Pepin K."/>
            <person name="Bhonagiri V."/>
            <person name="Nash W."/>
            <person name="Johnson M."/>
            <person name="Thiruvilangam P."/>
            <person name="Wilson R."/>
        </authorList>
    </citation>
    <scope>NUCLEOTIDE SEQUENCE [LARGE SCALE GENOMIC DNA]</scope>
    <source>
        <strain>ATCC BAA-1250 / SPB7</strain>
    </source>
</reference>
<gene>
    <name evidence="1" type="primary">yggU</name>
    <name type="ordered locus">SPAB_03867</name>
</gene>
<accession>A9N4P8</accession>
<protein>
    <recommendedName>
        <fullName evidence="1">UPF0235 protein YggU</fullName>
    </recommendedName>
</protein>
<sequence length="96" mass="10517">MSAVTRCEDGLVLRLYIQPKASRDSIVGLHGDEVKVAITAPPVDGQANSHLTKFLGKQFRVAKSQIVIEKGELGRHKQVKIIHPQQIPPEIAALTE</sequence>
<feature type="chain" id="PRO_1000082648" description="UPF0235 protein YggU">
    <location>
        <begin position="1"/>
        <end position="96"/>
    </location>
</feature>
<evidence type="ECO:0000255" key="1">
    <source>
        <dbReference type="HAMAP-Rule" id="MF_00634"/>
    </source>
</evidence>
<name>YGGU_SALPB</name>
<dbReference type="EMBL" id="CP000886">
    <property type="protein sequence ID" value="ABX69198.1"/>
    <property type="molecule type" value="Genomic_DNA"/>
</dbReference>
<dbReference type="RefSeq" id="WP_001277205.1">
    <property type="nucleotide sequence ID" value="NC_010102.1"/>
</dbReference>
<dbReference type="SMR" id="A9N4P8"/>
<dbReference type="KEGG" id="spq:SPAB_03867"/>
<dbReference type="PATRIC" id="fig|1016998.12.peg.3644"/>
<dbReference type="HOGENOM" id="CLU_130694_5_0_6"/>
<dbReference type="BioCyc" id="SENT1016998:SPAB_RS15720-MONOMER"/>
<dbReference type="Proteomes" id="UP000008556">
    <property type="component" value="Chromosome"/>
</dbReference>
<dbReference type="GO" id="GO:0005737">
    <property type="term" value="C:cytoplasm"/>
    <property type="evidence" value="ECO:0007669"/>
    <property type="project" value="TreeGrafter"/>
</dbReference>
<dbReference type="Gene3D" id="3.30.1200.10">
    <property type="entry name" value="YggU-like"/>
    <property type="match status" value="1"/>
</dbReference>
<dbReference type="HAMAP" id="MF_00634">
    <property type="entry name" value="UPF0235"/>
    <property type="match status" value="1"/>
</dbReference>
<dbReference type="InterPro" id="IPR003746">
    <property type="entry name" value="DUF167"/>
</dbReference>
<dbReference type="InterPro" id="IPR036591">
    <property type="entry name" value="YggU-like_sf"/>
</dbReference>
<dbReference type="NCBIfam" id="TIGR00251">
    <property type="entry name" value="DUF167 family protein"/>
    <property type="match status" value="1"/>
</dbReference>
<dbReference type="NCBIfam" id="NF003466">
    <property type="entry name" value="PRK05090.1"/>
    <property type="match status" value="1"/>
</dbReference>
<dbReference type="PANTHER" id="PTHR13420">
    <property type="entry name" value="UPF0235 PROTEIN C15ORF40"/>
    <property type="match status" value="1"/>
</dbReference>
<dbReference type="PANTHER" id="PTHR13420:SF7">
    <property type="entry name" value="UPF0235 PROTEIN C15ORF40"/>
    <property type="match status" value="1"/>
</dbReference>
<dbReference type="Pfam" id="PF02594">
    <property type="entry name" value="DUF167"/>
    <property type="match status" value="1"/>
</dbReference>
<dbReference type="SMART" id="SM01152">
    <property type="entry name" value="DUF167"/>
    <property type="match status" value="1"/>
</dbReference>
<dbReference type="SUPFAM" id="SSF69786">
    <property type="entry name" value="YggU-like"/>
    <property type="match status" value="1"/>
</dbReference>
<organism>
    <name type="scientific">Salmonella paratyphi B (strain ATCC BAA-1250 / SPB7)</name>
    <dbReference type="NCBI Taxonomy" id="1016998"/>
    <lineage>
        <taxon>Bacteria</taxon>
        <taxon>Pseudomonadati</taxon>
        <taxon>Pseudomonadota</taxon>
        <taxon>Gammaproteobacteria</taxon>
        <taxon>Enterobacterales</taxon>
        <taxon>Enterobacteriaceae</taxon>
        <taxon>Salmonella</taxon>
    </lineage>
</organism>
<proteinExistence type="inferred from homology"/>